<keyword id="KW-0143">Chaperone</keyword>
<organism>
    <name type="scientific">Bordetella petrii (strain ATCC BAA-461 / DSM 12804 / CCUG 43448)</name>
    <dbReference type="NCBI Taxonomy" id="340100"/>
    <lineage>
        <taxon>Bacteria</taxon>
        <taxon>Pseudomonadati</taxon>
        <taxon>Pseudomonadota</taxon>
        <taxon>Betaproteobacteria</taxon>
        <taxon>Burkholderiales</taxon>
        <taxon>Alcaligenaceae</taxon>
        <taxon>Bordetella</taxon>
    </lineage>
</organism>
<sequence>MAADDHFSLFGLPARFDIDAQALERAWRAVAAQVHPDRYATASPAERRVAMQWSARANEAYRQLRDPLLRARYLCEQAGVDLQTESNTAMDPAFLMQQMQWREMLDEARDDAAVFAELDAELSDARRQMRETLATLLDERHDYAAAGQKVREWMFVEKLAQELAAARPAG</sequence>
<reference key="1">
    <citation type="journal article" date="2008" name="BMC Genomics">
        <title>The missing link: Bordetella petrii is endowed with both the metabolic versatility of environmental bacteria and virulence traits of pathogenic Bordetellae.</title>
        <authorList>
            <person name="Gross R."/>
            <person name="Guzman C.A."/>
            <person name="Sebaihia M."/>
            <person name="Martin dos Santos V.A.P."/>
            <person name="Pieper D.H."/>
            <person name="Koebnik R."/>
            <person name="Lechner M."/>
            <person name="Bartels D."/>
            <person name="Buhrmester J."/>
            <person name="Choudhuri J.V."/>
            <person name="Ebensen T."/>
            <person name="Gaigalat L."/>
            <person name="Herrmann S."/>
            <person name="Khachane A.N."/>
            <person name="Larisch C."/>
            <person name="Link S."/>
            <person name="Linke B."/>
            <person name="Meyer F."/>
            <person name="Mormann S."/>
            <person name="Nakunst D."/>
            <person name="Rueckert C."/>
            <person name="Schneiker-Bekel S."/>
            <person name="Schulze K."/>
            <person name="Voerholter F.-J."/>
            <person name="Yevsa T."/>
            <person name="Engle J.T."/>
            <person name="Goldman W.E."/>
            <person name="Puehler A."/>
            <person name="Goebel U.B."/>
            <person name="Goesmann A."/>
            <person name="Bloecker H."/>
            <person name="Kaiser O."/>
            <person name="Martinez-Arias R."/>
        </authorList>
    </citation>
    <scope>NUCLEOTIDE SEQUENCE [LARGE SCALE GENOMIC DNA]</scope>
    <source>
        <strain>ATCC BAA-461 / DSM 12804 / CCUG 43448</strain>
    </source>
</reference>
<name>HSCB_BORPD</name>
<comment type="function">
    <text evidence="1">Co-chaperone involved in the maturation of iron-sulfur cluster-containing proteins. Seems to help targeting proteins to be folded toward HscA.</text>
</comment>
<comment type="subunit">
    <text evidence="1">Interacts with HscA and stimulates its ATPase activity.</text>
</comment>
<comment type="similarity">
    <text evidence="1">Belongs to the HscB family.</text>
</comment>
<gene>
    <name evidence="1" type="primary">hscB</name>
    <name type="ordered locus">Bpet2774</name>
</gene>
<dbReference type="EMBL" id="AM902716">
    <property type="protein sequence ID" value="CAP43116.1"/>
    <property type="molecule type" value="Genomic_DNA"/>
</dbReference>
<dbReference type="SMR" id="A9IQZ9"/>
<dbReference type="STRING" id="94624.Bpet2774"/>
<dbReference type="KEGG" id="bpt:Bpet2774"/>
<dbReference type="eggNOG" id="COG1076">
    <property type="taxonomic scope" value="Bacteria"/>
</dbReference>
<dbReference type="Proteomes" id="UP000001225">
    <property type="component" value="Chromosome"/>
</dbReference>
<dbReference type="GO" id="GO:1990230">
    <property type="term" value="C:iron-sulfur cluster transfer complex"/>
    <property type="evidence" value="ECO:0007669"/>
    <property type="project" value="TreeGrafter"/>
</dbReference>
<dbReference type="GO" id="GO:0001671">
    <property type="term" value="F:ATPase activator activity"/>
    <property type="evidence" value="ECO:0007669"/>
    <property type="project" value="InterPro"/>
</dbReference>
<dbReference type="GO" id="GO:0051087">
    <property type="term" value="F:protein-folding chaperone binding"/>
    <property type="evidence" value="ECO:0007669"/>
    <property type="project" value="InterPro"/>
</dbReference>
<dbReference type="GO" id="GO:0044571">
    <property type="term" value="P:[2Fe-2S] cluster assembly"/>
    <property type="evidence" value="ECO:0007669"/>
    <property type="project" value="InterPro"/>
</dbReference>
<dbReference type="GO" id="GO:0051259">
    <property type="term" value="P:protein complex oligomerization"/>
    <property type="evidence" value="ECO:0007669"/>
    <property type="project" value="InterPro"/>
</dbReference>
<dbReference type="GO" id="GO:0006457">
    <property type="term" value="P:protein folding"/>
    <property type="evidence" value="ECO:0007669"/>
    <property type="project" value="UniProtKB-UniRule"/>
</dbReference>
<dbReference type="CDD" id="cd06257">
    <property type="entry name" value="DnaJ"/>
    <property type="match status" value="1"/>
</dbReference>
<dbReference type="Gene3D" id="1.10.287.110">
    <property type="entry name" value="DnaJ domain"/>
    <property type="match status" value="1"/>
</dbReference>
<dbReference type="Gene3D" id="1.20.1280.20">
    <property type="entry name" value="HscB, C-terminal domain"/>
    <property type="match status" value="1"/>
</dbReference>
<dbReference type="HAMAP" id="MF_00682">
    <property type="entry name" value="HscB"/>
    <property type="match status" value="1"/>
</dbReference>
<dbReference type="InterPro" id="IPR001623">
    <property type="entry name" value="DnaJ_domain"/>
</dbReference>
<dbReference type="InterPro" id="IPR004640">
    <property type="entry name" value="HscB"/>
</dbReference>
<dbReference type="InterPro" id="IPR036386">
    <property type="entry name" value="HscB_C_sf"/>
</dbReference>
<dbReference type="InterPro" id="IPR009073">
    <property type="entry name" value="HscB_oligo_C"/>
</dbReference>
<dbReference type="InterPro" id="IPR036869">
    <property type="entry name" value="J_dom_sf"/>
</dbReference>
<dbReference type="NCBIfam" id="TIGR00714">
    <property type="entry name" value="hscB"/>
    <property type="match status" value="1"/>
</dbReference>
<dbReference type="NCBIfam" id="NF002935">
    <property type="entry name" value="PRK03578.1"/>
    <property type="match status" value="1"/>
</dbReference>
<dbReference type="PANTHER" id="PTHR14021">
    <property type="entry name" value="IRON-SULFUR CLUSTER CO-CHAPERONE PROTEIN HSCB"/>
    <property type="match status" value="1"/>
</dbReference>
<dbReference type="PANTHER" id="PTHR14021:SF15">
    <property type="entry name" value="IRON-SULFUR CLUSTER CO-CHAPERONE PROTEIN HSCB"/>
    <property type="match status" value="1"/>
</dbReference>
<dbReference type="Pfam" id="PF07743">
    <property type="entry name" value="HSCB_C"/>
    <property type="match status" value="1"/>
</dbReference>
<dbReference type="SMART" id="SM00271">
    <property type="entry name" value="DnaJ"/>
    <property type="match status" value="1"/>
</dbReference>
<dbReference type="SUPFAM" id="SSF46565">
    <property type="entry name" value="Chaperone J-domain"/>
    <property type="match status" value="1"/>
</dbReference>
<dbReference type="SUPFAM" id="SSF47144">
    <property type="entry name" value="HSC20 (HSCB), C-terminal oligomerisation domain"/>
    <property type="match status" value="1"/>
</dbReference>
<dbReference type="PROSITE" id="PS50076">
    <property type="entry name" value="DNAJ_2"/>
    <property type="match status" value="1"/>
</dbReference>
<proteinExistence type="inferred from homology"/>
<accession>A9IQZ9</accession>
<protein>
    <recommendedName>
        <fullName evidence="1">Co-chaperone protein HscB homolog</fullName>
    </recommendedName>
</protein>
<evidence type="ECO:0000255" key="1">
    <source>
        <dbReference type="HAMAP-Rule" id="MF_00682"/>
    </source>
</evidence>
<feature type="chain" id="PRO_1000131726" description="Co-chaperone protein HscB homolog">
    <location>
        <begin position="1"/>
        <end position="170"/>
    </location>
</feature>
<feature type="domain" description="J" evidence="1">
    <location>
        <begin position="5"/>
        <end position="79"/>
    </location>
</feature>